<accession>P36636</accession>
<comment type="function">
    <text evidence="2">Involved in a peptide intake transport system that plays a role in the resistance to antimicrobial peptides.</text>
</comment>
<comment type="subcellular location">
    <subcellularLocation>
        <location evidence="4">Cell inner membrane</location>
        <topology evidence="4">Peripheral membrane protein</topology>
    </subcellularLocation>
</comment>
<comment type="induction">
    <text evidence="2">Part of the sapA-sapB-sapC-sapD-sapF operon, RNA detected in mid-log phase cells.</text>
</comment>
<comment type="disruption phenotype">
    <text evidence="2">Loss of resistance to protamine.</text>
</comment>
<comment type="similarity">
    <text evidence="4">Belongs to the ABC transporter superfamily.</text>
</comment>
<proteinExistence type="evidence at transcript level"/>
<dbReference type="EMBL" id="X74212">
    <property type="protein sequence ID" value="CAA52287.1"/>
    <property type="molecule type" value="Genomic_DNA"/>
</dbReference>
<dbReference type="EMBL" id="AE006468">
    <property type="protein sequence ID" value="AAL20612.1"/>
    <property type="molecule type" value="Genomic_DNA"/>
</dbReference>
<dbReference type="PIR" id="S39588">
    <property type="entry name" value="S39588"/>
</dbReference>
<dbReference type="RefSeq" id="NP_460653.1">
    <property type="nucleotide sequence ID" value="NC_003197.2"/>
</dbReference>
<dbReference type="RefSeq" id="WP_001128868.1">
    <property type="nucleotide sequence ID" value="NC_003197.2"/>
</dbReference>
<dbReference type="SMR" id="P36636"/>
<dbReference type="STRING" id="99287.STM1695"/>
<dbReference type="TCDB" id="3.A.1.5.5">
    <property type="family name" value="the atp-binding cassette (abc) superfamily"/>
</dbReference>
<dbReference type="PaxDb" id="99287-STM1695"/>
<dbReference type="GeneID" id="1253213"/>
<dbReference type="KEGG" id="stm:STM1695"/>
<dbReference type="PATRIC" id="fig|99287.12.peg.1789"/>
<dbReference type="HOGENOM" id="CLU_000604_1_23_6"/>
<dbReference type="OMA" id="QRFNWRK"/>
<dbReference type="PhylomeDB" id="P36636"/>
<dbReference type="BioCyc" id="SENT99287:STM1695-MONOMER"/>
<dbReference type="Proteomes" id="UP000001014">
    <property type="component" value="Chromosome"/>
</dbReference>
<dbReference type="GO" id="GO:0005886">
    <property type="term" value="C:plasma membrane"/>
    <property type="evidence" value="ECO:0007669"/>
    <property type="project" value="UniProtKB-SubCell"/>
</dbReference>
<dbReference type="GO" id="GO:0005524">
    <property type="term" value="F:ATP binding"/>
    <property type="evidence" value="ECO:0007669"/>
    <property type="project" value="UniProtKB-KW"/>
</dbReference>
<dbReference type="GO" id="GO:0016887">
    <property type="term" value="F:ATP hydrolysis activity"/>
    <property type="evidence" value="ECO:0007669"/>
    <property type="project" value="InterPro"/>
</dbReference>
<dbReference type="GO" id="GO:0015833">
    <property type="term" value="P:peptide transport"/>
    <property type="evidence" value="ECO:0007669"/>
    <property type="project" value="UniProtKB-KW"/>
</dbReference>
<dbReference type="GO" id="GO:0015031">
    <property type="term" value="P:protein transport"/>
    <property type="evidence" value="ECO:0007669"/>
    <property type="project" value="UniProtKB-KW"/>
</dbReference>
<dbReference type="CDD" id="cd03257">
    <property type="entry name" value="ABC_NikE_OppD_transporters"/>
    <property type="match status" value="1"/>
</dbReference>
<dbReference type="FunFam" id="3.40.50.300:FF:000443">
    <property type="entry name" value="Peptide transport system ATP-binding protein SapD"/>
    <property type="match status" value="1"/>
</dbReference>
<dbReference type="Gene3D" id="3.40.50.300">
    <property type="entry name" value="P-loop containing nucleotide triphosphate hydrolases"/>
    <property type="match status" value="1"/>
</dbReference>
<dbReference type="InterPro" id="IPR003593">
    <property type="entry name" value="AAA+_ATPase"/>
</dbReference>
<dbReference type="InterPro" id="IPR050388">
    <property type="entry name" value="ABC_Ni/Peptide_Import"/>
</dbReference>
<dbReference type="InterPro" id="IPR003439">
    <property type="entry name" value="ABC_transporter-like_ATP-bd"/>
</dbReference>
<dbReference type="InterPro" id="IPR013563">
    <property type="entry name" value="Oligopep_ABC_C"/>
</dbReference>
<dbReference type="InterPro" id="IPR027417">
    <property type="entry name" value="P-loop_NTPase"/>
</dbReference>
<dbReference type="NCBIfam" id="TIGR01727">
    <property type="entry name" value="oligo_HPY"/>
    <property type="match status" value="1"/>
</dbReference>
<dbReference type="NCBIfam" id="NF011674">
    <property type="entry name" value="PRK15093.1"/>
    <property type="match status" value="1"/>
</dbReference>
<dbReference type="PANTHER" id="PTHR43297">
    <property type="entry name" value="OLIGOPEPTIDE TRANSPORT ATP-BINDING PROTEIN APPD"/>
    <property type="match status" value="1"/>
</dbReference>
<dbReference type="PANTHER" id="PTHR43297:SF4">
    <property type="entry name" value="PUTRESCINE EXPORT SYSTEM ATP-BINDING PROTEIN SAPD"/>
    <property type="match status" value="1"/>
</dbReference>
<dbReference type="Pfam" id="PF00005">
    <property type="entry name" value="ABC_tran"/>
    <property type="match status" value="1"/>
</dbReference>
<dbReference type="Pfam" id="PF08352">
    <property type="entry name" value="oligo_HPY"/>
    <property type="match status" value="1"/>
</dbReference>
<dbReference type="SMART" id="SM00382">
    <property type="entry name" value="AAA"/>
    <property type="match status" value="1"/>
</dbReference>
<dbReference type="SUPFAM" id="SSF52540">
    <property type="entry name" value="P-loop containing nucleoside triphosphate hydrolases"/>
    <property type="match status" value="1"/>
</dbReference>
<dbReference type="PROSITE" id="PS50893">
    <property type="entry name" value="ABC_TRANSPORTER_2"/>
    <property type="match status" value="1"/>
</dbReference>
<feature type="chain" id="PRO_0000092965" description="Peptide transport system ATP-binding protein SapD">
    <location>
        <begin position="1"/>
        <end position="330"/>
    </location>
</feature>
<feature type="domain" description="ABC transporter" evidence="1">
    <location>
        <begin position="6"/>
        <end position="259"/>
    </location>
</feature>
<feature type="binding site" evidence="1">
    <location>
        <begin position="40"/>
        <end position="47"/>
    </location>
    <ligand>
        <name>ATP</name>
        <dbReference type="ChEBI" id="CHEBI:30616"/>
    </ligand>
</feature>
<feature type="sequence conflict" description="In Ref. 1; CAA52287." evidence="4" ref="1">
    <original>DA</original>
    <variation>EP</variation>
    <location>
        <begin position="150"/>
        <end position="151"/>
    </location>
</feature>
<evidence type="ECO:0000255" key="1">
    <source>
        <dbReference type="PROSITE-ProRule" id="PRU00434"/>
    </source>
</evidence>
<evidence type="ECO:0000269" key="2">
    <source>
    </source>
</evidence>
<evidence type="ECO:0000303" key="3">
    <source>
    </source>
</evidence>
<evidence type="ECO:0000305" key="4"/>
<sequence>MPLLDIRNLTIEFKTSEGWVKAVDRVSMTLSEGEIRGLVGESGSGKSLIAKAICGVAKDNWRVTADRMRFDDIDLLRLSSRERRKLVGHNVSMIFQEPQSCLDPSERVGRQLMQNIPAWTYKGRWWQRLGWRKRRAIELLHRVGIKDHKDAMRSFPYELTDGECQKVMIAIALANQPRLLIADEPTNSMEPTTQAQIFRLLTRLNQNSNTTILLISHDLQMLSQWADKINVLYCGQTVETAPSKDLVTMPHHPYTQALIRAIPDFGSAMPHKSRLNTLPGAIPLLEQLPIGCRLGPRCPYAQRECIITPRLTGAKNHLYACHFPLNMERE</sequence>
<gene>
    <name evidence="3" type="primary">sapD</name>
    <name type="ordered locus">STM1695</name>
</gene>
<organism>
    <name type="scientific">Salmonella typhimurium (strain LT2 / SGSC1412 / ATCC 700720)</name>
    <dbReference type="NCBI Taxonomy" id="99287"/>
    <lineage>
        <taxon>Bacteria</taxon>
        <taxon>Pseudomonadati</taxon>
        <taxon>Pseudomonadota</taxon>
        <taxon>Gammaproteobacteria</taxon>
        <taxon>Enterobacterales</taxon>
        <taxon>Enterobacteriaceae</taxon>
        <taxon>Salmonella</taxon>
    </lineage>
</organism>
<reference key="1">
    <citation type="journal article" date="1993" name="EMBO J.">
        <title>Molecular genetic analysis of a locus required for resistance to antimicrobial peptides in Salmonella typhimurium.</title>
        <authorList>
            <person name="Parra-Lopez C."/>
            <person name="Baer M.T."/>
            <person name="Groisman E.A."/>
        </authorList>
    </citation>
    <scope>NUCLEOTIDE SEQUENCE [GENOMIC DNA]</scope>
    <scope>FUNCTION</scope>
    <scope>OPERON STRUCTURE</scope>
    <scope>DISRUPTION PHENOTYPE</scope>
    <source>
        <strain>ATCC 14028s / SGSG 2262</strain>
    </source>
</reference>
<reference key="2">
    <citation type="journal article" date="2001" name="Nature">
        <title>Complete genome sequence of Salmonella enterica serovar Typhimurium LT2.</title>
        <authorList>
            <person name="McClelland M."/>
            <person name="Sanderson K.E."/>
            <person name="Spieth J."/>
            <person name="Clifton S.W."/>
            <person name="Latreille P."/>
            <person name="Courtney L."/>
            <person name="Porwollik S."/>
            <person name="Ali J."/>
            <person name="Dante M."/>
            <person name="Du F."/>
            <person name="Hou S."/>
            <person name="Layman D."/>
            <person name="Leonard S."/>
            <person name="Nguyen C."/>
            <person name="Scott K."/>
            <person name="Holmes A."/>
            <person name="Grewal N."/>
            <person name="Mulvaney E."/>
            <person name="Ryan E."/>
            <person name="Sun H."/>
            <person name="Florea L."/>
            <person name="Miller W."/>
            <person name="Stoneking T."/>
            <person name="Nhan M."/>
            <person name="Waterston R."/>
            <person name="Wilson R.K."/>
        </authorList>
    </citation>
    <scope>NUCLEOTIDE SEQUENCE [LARGE SCALE GENOMIC DNA]</scope>
    <source>
        <strain>LT2 / SGSC1412 / ATCC 700720</strain>
    </source>
</reference>
<keyword id="KW-0067">ATP-binding</keyword>
<keyword id="KW-0997">Cell inner membrane</keyword>
<keyword id="KW-1003">Cell membrane</keyword>
<keyword id="KW-0472">Membrane</keyword>
<keyword id="KW-0547">Nucleotide-binding</keyword>
<keyword id="KW-0571">Peptide transport</keyword>
<keyword id="KW-0653">Protein transport</keyword>
<keyword id="KW-1185">Reference proteome</keyword>
<keyword id="KW-0813">Transport</keyword>
<name>SAPD_SALTY</name>
<protein>
    <recommendedName>
        <fullName>Peptide transport system ATP-binding protein SapD</fullName>
    </recommendedName>
</protein>